<keyword id="KW-0028">Amino-acid biosynthesis</keyword>
<keyword id="KW-0170">Cobalt</keyword>
<keyword id="KW-0220">Diaminopimelate biosynthesis</keyword>
<keyword id="KW-0378">Hydrolase</keyword>
<keyword id="KW-0457">Lysine biosynthesis</keyword>
<keyword id="KW-0479">Metal-binding</keyword>
<keyword id="KW-0862">Zinc</keyword>
<sequence>MSATLALTEQLIARASVTPDDQHCQQIMTERLAALGFECETIASHGVTNLWAVKRGTDGRDGKLLAFAGHTDVVPTGPLEQWTSPPFVPAHRDGKLYGRGAADMKTSLAAFVVASEEFVAAHPDHRGAIAFLITSDEEGPATDGTVKVVELLQERGERLDYCIVGEPTSTAELGDVVKNGRRGSMSGELVIKGVQGHIAYPHLAKNPIHLLAPALAELAAEQWDAGNEYFPPTTWQVSNLHAGTGATNVIPGHADLLFNFRFSTASTVEGLQARVHAILDKHGLEYTLKWSVSGLPFLTPRGELSGALEHAIRTETGITTELSTTGGTSDGRFIARICPQVIEFGPPNGSIHKIDEHIEVRFVDPLKNVYRRALEQLIA</sequence>
<gene>
    <name evidence="1" type="primary">dapE</name>
    <name type="ordered locus">Bcen_6045</name>
</gene>
<evidence type="ECO:0000255" key="1">
    <source>
        <dbReference type="HAMAP-Rule" id="MF_01690"/>
    </source>
</evidence>
<dbReference type="EC" id="3.5.1.18" evidence="1"/>
<dbReference type="EMBL" id="CP000380">
    <property type="protein sequence ID" value="ABF80910.1"/>
    <property type="molecule type" value="Genomic_DNA"/>
</dbReference>
<dbReference type="SMR" id="Q1BHJ5"/>
<dbReference type="HOGENOM" id="CLU_021802_4_0_4"/>
<dbReference type="UniPathway" id="UPA00034">
    <property type="reaction ID" value="UER00021"/>
</dbReference>
<dbReference type="GO" id="GO:0008777">
    <property type="term" value="F:acetylornithine deacetylase activity"/>
    <property type="evidence" value="ECO:0007669"/>
    <property type="project" value="TreeGrafter"/>
</dbReference>
<dbReference type="GO" id="GO:0050897">
    <property type="term" value="F:cobalt ion binding"/>
    <property type="evidence" value="ECO:0007669"/>
    <property type="project" value="UniProtKB-UniRule"/>
</dbReference>
<dbReference type="GO" id="GO:0009014">
    <property type="term" value="F:succinyl-diaminopimelate desuccinylase activity"/>
    <property type="evidence" value="ECO:0007669"/>
    <property type="project" value="UniProtKB-UniRule"/>
</dbReference>
<dbReference type="GO" id="GO:0008270">
    <property type="term" value="F:zinc ion binding"/>
    <property type="evidence" value="ECO:0007669"/>
    <property type="project" value="UniProtKB-UniRule"/>
</dbReference>
<dbReference type="GO" id="GO:0019877">
    <property type="term" value="P:diaminopimelate biosynthetic process"/>
    <property type="evidence" value="ECO:0007669"/>
    <property type="project" value="UniProtKB-UniRule"/>
</dbReference>
<dbReference type="GO" id="GO:0006526">
    <property type="term" value="P:L-arginine biosynthetic process"/>
    <property type="evidence" value="ECO:0007669"/>
    <property type="project" value="TreeGrafter"/>
</dbReference>
<dbReference type="GO" id="GO:0009089">
    <property type="term" value="P:lysine biosynthetic process via diaminopimelate"/>
    <property type="evidence" value="ECO:0007669"/>
    <property type="project" value="UniProtKB-UniRule"/>
</dbReference>
<dbReference type="CDD" id="cd03891">
    <property type="entry name" value="M20_DapE_proteobac"/>
    <property type="match status" value="1"/>
</dbReference>
<dbReference type="FunFam" id="3.30.70.360:FF:000011">
    <property type="entry name" value="Succinyl-diaminopimelate desuccinylase"/>
    <property type="match status" value="1"/>
</dbReference>
<dbReference type="FunFam" id="3.40.630.10:FF:000005">
    <property type="entry name" value="Succinyl-diaminopimelate desuccinylase"/>
    <property type="match status" value="1"/>
</dbReference>
<dbReference type="Gene3D" id="3.40.630.10">
    <property type="entry name" value="Zn peptidases"/>
    <property type="match status" value="2"/>
</dbReference>
<dbReference type="HAMAP" id="MF_01690">
    <property type="entry name" value="DapE"/>
    <property type="match status" value="1"/>
</dbReference>
<dbReference type="InterPro" id="IPR001261">
    <property type="entry name" value="ArgE/DapE_CS"/>
</dbReference>
<dbReference type="InterPro" id="IPR036264">
    <property type="entry name" value="Bact_exopeptidase_dim_dom"/>
</dbReference>
<dbReference type="InterPro" id="IPR005941">
    <property type="entry name" value="DapE_proteobac"/>
</dbReference>
<dbReference type="InterPro" id="IPR002933">
    <property type="entry name" value="Peptidase_M20"/>
</dbReference>
<dbReference type="InterPro" id="IPR011650">
    <property type="entry name" value="Peptidase_M20_dimer"/>
</dbReference>
<dbReference type="InterPro" id="IPR050072">
    <property type="entry name" value="Peptidase_M20A"/>
</dbReference>
<dbReference type="NCBIfam" id="TIGR01246">
    <property type="entry name" value="dapE_proteo"/>
    <property type="match status" value="1"/>
</dbReference>
<dbReference type="NCBIfam" id="NF009557">
    <property type="entry name" value="PRK13009.1"/>
    <property type="match status" value="1"/>
</dbReference>
<dbReference type="PANTHER" id="PTHR43808">
    <property type="entry name" value="ACETYLORNITHINE DEACETYLASE"/>
    <property type="match status" value="1"/>
</dbReference>
<dbReference type="PANTHER" id="PTHR43808:SF31">
    <property type="entry name" value="N-ACETYL-L-CITRULLINE DEACETYLASE"/>
    <property type="match status" value="1"/>
</dbReference>
<dbReference type="Pfam" id="PF07687">
    <property type="entry name" value="M20_dimer"/>
    <property type="match status" value="1"/>
</dbReference>
<dbReference type="Pfam" id="PF01546">
    <property type="entry name" value="Peptidase_M20"/>
    <property type="match status" value="1"/>
</dbReference>
<dbReference type="SUPFAM" id="SSF55031">
    <property type="entry name" value="Bacterial exopeptidase dimerisation domain"/>
    <property type="match status" value="1"/>
</dbReference>
<dbReference type="SUPFAM" id="SSF53187">
    <property type="entry name" value="Zn-dependent exopeptidases"/>
    <property type="match status" value="1"/>
</dbReference>
<dbReference type="PROSITE" id="PS00758">
    <property type="entry name" value="ARGE_DAPE_CPG2_1"/>
    <property type="match status" value="1"/>
</dbReference>
<comment type="function">
    <text evidence="1">Catalyzes the hydrolysis of N-succinyl-L,L-diaminopimelic acid (SDAP), forming succinate and LL-2,6-diaminopimelate (DAP), an intermediate involved in the bacterial biosynthesis of lysine and meso-diaminopimelic acid, an essential component of bacterial cell walls.</text>
</comment>
<comment type="catalytic activity">
    <reaction evidence="1">
        <text>N-succinyl-(2S,6S)-2,6-diaminopimelate + H2O = (2S,6S)-2,6-diaminopimelate + succinate</text>
        <dbReference type="Rhea" id="RHEA:22608"/>
        <dbReference type="ChEBI" id="CHEBI:15377"/>
        <dbReference type="ChEBI" id="CHEBI:30031"/>
        <dbReference type="ChEBI" id="CHEBI:57609"/>
        <dbReference type="ChEBI" id="CHEBI:58087"/>
        <dbReference type="EC" id="3.5.1.18"/>
    </reaction>
</comment>
<comment type="cofactor">
    <cofactor evidence="1">
        <name>Zn(2+)</name>
        <dbReference type="ChEBI" id="CHEBI:29105"/>
    </cofactor>
    <cofactor evidence="1">
        <name>Co(2+)</name>
        <dbReference type="ChEBI" id="CHEBI:48828"/>
    </cofactor>
    <text evidence="1">Binds 2 Zn(2+) or Co(2+) ions per subunit.</text>
</comment>
<comment type="pathway">
    <text evidence="1">Amino-acid biosynthesis; L-lysine biosynthesis via DAP pathway; LL-2,6-diaminopimelate from (S)-tetrahydrodipicolinate (succinylase route): step 3/3.</text>
</comment>
<comment type="subunit">
    <text evidence="1">Homodimer.</text>
</comment>
<comment type="similarity">
    <text evidence="1">Belongs to the peptidase M20A family. DapE subfamily.</text>
</comment>
<reference key="1">
    <citation type="submission" date="2006-05" db="EMBL/GenBank/DDBJ databases">
        <title>Complete sequence of chromosome 3 of Burkholderia cenocepacia AU 1054.</title>
        <authorList>
            <consortium name="US DOE Joint Genome Institute"/>
            <person name="Copeland A."/>
            <person name="Lucas S."/>
            <person name="Lapidus A."/>
            <person name="Barry K."/>
            <person name="Detter J.C."/>
            <person name="Glavina del Rio T."/>
            <person name="Hammon N."/>
            <person name="Israni S."/>
            <person name="Dalin E."/>
            <person name="Tice H."/>
            <person name="Pitluck S."/>
            <person name="Chain P."/>
            <person name="Malfatti S."/>
            <person name="Shin M."/>
            <person name="Vergez L."/>
            <person name="Schmutz J."/>
            <person name="Larimer F."/>
            <person name="Land M."/>
            <person name="Hauser L."/>
            <person name="Kyrpides N."/>
            <person name="Lykidis A."/>
            <person name="LiPuma J.J."/>
            <person name="Konstantinidis K."/>
            <person name="Tiedje J.M."/>
            <person name="Richardson P."/>
        </authorList>
    </citation>
    <scope>NUCLEOTIDE SEQUENCE [LARGE SCALE GENOMIC DNA]</scope>
    <source>
        <strain>AU 1054</strain>
    </source>
</reference>
<organism>
    <name type="scientific">Burkholderia orbicola (strain AU 1054)</name>
    <dbReference type="NCBI Taxonomy" id="331271"/>
    <lineage>
        <taxon>Bacteria</taxon>
        <taxon>Pseudomonadati</taxon>
        <taxon>Pseudomonadota</taxon>
        <taxon>Betaproteobacteria</taxon>
        <taxon>Burkholderiales</taxon>
        <taxon>Burkholderiaceae</taxon>
        <taxon>Burkholderia</taxon>
        <taxon>Burkholderia cepacia complex</taxon>
        <taxon>Burkholderia orbicola</taxon>
    </lineage>
</organism>
<protein>
    <recommendedName>
        <fullName evidence="1">Succinyl-diaminopimelate desuccinylase</fullName>
        <shortName evidence="1">SDAP desuccinylase</shortName>
        <ecNumber evidence="1">3.5.1.18</ecNumber>
    </recommendedName>
    <alternativeName>
        <fullName evidence="1">N-succinyl-LL-2,6-diaminoheptanedioate amidohydrolase</fullName>
    </alternativeName>
</protein>
<accession>Q1BHJ5</accession>
<proteinExistence type="inferred from homology"/>
<name>DAPE_BURO1</name>
<feature type="chain" id="PRO_0000375497" description="Succinyl-diaminopimelate desuccinylase">
    <location>
        <begin position="1"/>
        <end position="379"/>
    </location>
</feature>
<feature type="active site" evidence="1">
    <location>
        <position position="72"/>
    </location>
</feature>
<feature type="active site" description="Proton acceptor" evidence="1">
    <location>
        <position position="137"/>
    </location>
</feature>
<feature type="binding site" evidence="1">
    <location>
        <position position="70"/>
    </location>
    <ligand>
        <name>Zn(2+)</name>
        <dbReference type="ChEBI" id="CHEBI:29105"/>
        <label>1</label>
    </ligand>
</feature>
<feature type="binding site" evidence="1">
    <location>
        <position position="103"/>
    </location>
    <ligand>
        <name>Zn(2+)</name>
        <dbReference type="ChEBI" id="CHEBI:29105"/>
        <label>1</label>
    </ligand>
</feature>
<feature type="binding site" evidence="1">
    <location>
        <position position="103"/>
    </location>
    <ligand>
        <name>Zn(2+)</name>
        <dbReference type="ChEBI" id="CHEBI:29105"/>
        <label>2</label>
    </ligand>
</feature>
<feature type="binding site" evidence="1">
    <location>
        <position position="138"/>
    </location>
    <ligand>
        <name>Zn(2+)</name>
        <dbReference type="ChEBI" id="CHEBI:29105"/>
        <label>2</label>
    </ligand>
</feature>
<feature type="binding site" evidence="1">
    <location>
        <position position="166"/>
    </location>
    <ligand>
        <name>Zn(2+)</name>
        <dbReference type="ChEBI" id="CHEBI:29105"/>
        <label>1</label>
    </ligand>
</feature>
<feature type="binding site" evidence="1">
    <location>
        <position position="352"/>
    </location>
    <ligand>
        <name>Zn(2+)</name>
        <dbReference type="ChEBI" id="CHEBI:29105"/>
        <label>2</label>
    </ligand>
</feature>